<organism>
    <name type="scientific">Elaphe quadrivirgata</name>
    <name type="common">Japanese four-lined ratsnake</name>
    <name type="synonym">Coluber quadrivirgatus</name>
    <dbReference type="NCBI Taxonomy" id="86195"/>
    <lineage>
        <taxon>Eukaryota</taxon>
        <taxon>Metazoa</taxon>
        <taxon>Chordata</taxon>
        <taxon>Craniata</taxon>
        <taxon>Vertebrata</taxon>
        <taxon>Euteleostomi</taxon>
        <taxon>Lepidosauria</taxon>
        <taxon>Squamata</taxon>
        <taxon>Bifurcata</taxon>
        <taxon>Unidentata</taxon>
        <taxon>Episquamata</taxon>
        <taxon>Toxicofera</taxon>
        <taxon>Serpentes</taxon>
        <taxon>Colubroidea</taxon>
        <taxon>Colubridae</taxon>
        <taxon>Colubrinae</taxon>
        <taxon>Elaphe</taxon>
    </lineage>
</organism>
<evidence type="ECO:0000250" key="1">
    <source>
        <dbReference type="UniProtKB" id="Q7LZI1"/>
    </source>
</evidence>
<evidence type="ECO:0000255" key="2">
    <source>
        <dbReference type="PROSITE-ProRule" id="PRU00498"/>
    </source>
</evidence>
<evidence type="ECO:0000269" key="3">
    <source>
    </source>
</evidence>
<evidence type="ECO:0000305" key="4"/>
<evidence type="ECO:0000305" key="5">
    <source>
    </source>
</evidence>
<accession>Q9PWI4</accession>
<comment type="function">
    <text>Inhibits the enzymatic activity of all phospholipase A2 (PA2) groups.</text>
</comment>
<comment type="subunit">
    <text>Heterodimer of subunit A and subunit B.</text>
</comment>
<comment type="subcellular location">
    <subcellularLocation>
        <location evidence="3">Secreted</location>
    </subcellularLocation>
    <text evidence="3">Secreted in blood plasma.</text>
</comment>
<comment type="tissue specificity">
    <text evidence="3">Expressed by the liver. Not expressed in esophagus, stomach, pancreas, spleen, gall bladder, small intestine, rectum, kidney, trachea, lung, testis and body fat.</text>
</comment>
<comment type="PTM">
    <text evidence="3">N-glycosylated.</text>
</comment>
<comment type="similarity">
    <text evidence="4">Belongs to the CNF-like-inhibitor family.</text>
</comment>
<name>PLIGA_ELAQU</name>
<proteinExistence type="evidence at protein level"/>
<protein>
    <recommendedName>
        <fullName>Phospholipase A2 inhibitor gamma subunit A</fullName>
        <shortName>gamma-PLI A</shortName>
    </recommendedName>
</protein>
<dbReference type="EMBL" id="AB021425">
    <property type="protein sequence ID" value="BAA83078.1"/>
    <property type="molecule type" value="mRNA"/>
</dbReference>
<dbReference type="SMR" id="Q9PWI4"/>
<dbReference type="GO" id="GO:0005576">
    <property type="term" value="C:extracellular region"/>
    <property type="evidence" value="ECO:0007669"/>
    <property type="project" value="UniProtKB-SubCell"/>
</dbReference>
<dbReference type="GO" id="GO:0019834">
    <property type="term" value="F:phospholipase A2 inhibitor activity"/>
    <property type="evidence" value="ECO:0007669"/>
    <property type="project" value="UniProtKB-KW"/>
</dbReference>
<dbReference type="CDD" id="cd23629">
    <property type="entry name" value="TFP_LU_ECD_PLIGA"/>
    <property type="match status" value="1"/>
</dbReference>
<dbReference type="InterPro" id="IPR050918">
    <property type="entry name" value="CNF-like_PLA2_Inhibitor"/>
</dbReference>
<dbReference type="InterPro" id="IPR016054">
    <property type="entry name" value="LY6_UPA_recep-like"/>
</dbReference>
<dbReference type="InterPro" id="IPR016338">
    <property type="entry name" value="PLipase_A2-inh_b-type"/>
</dbReference>
<dbReference type="InterPro" id="IPR004126">
    <property type="entry name" value="PLipase_A2_inh_N"/>
</dbReference>
<dbReference type="InterPro" id="IPR045860">
    <property type="entry name" value="Snake_toxin-like_sf"/>
</dbReference>
<dbReference type="PANTHER" id="PTHR20914">
    <property type="entry name" value="LY6/PLAUR DOMAIN-CONTAINING PROTEIN 8"/>
    <property type="match status" value="1"/>
</dbReference>
<dbReference type="PANTHER" id="PTHR20914:SF30">
    <property type="entry name" value="LY6_PLAUR DOMAIN CONTAINING 9"/>
    <property type="match status" value="1"/>
</dbReference>
<dbReference type="Pfam" id="PF02988">
    <property type="entry name" value="PLA2_inh"/>
    <property type="match status" value="1"/>
</dbReference>
<dbReference type="Pfam" id="PF00021">
    <property type="entry name" value="UPAR_LY6"/>
    <property type="match status" value="1"/>
</dbReference>
<dbReference type="PIRSF" id="PIRSF002023">
    <property type="entry name" value="PLA2_inhib_alpha/gamma"/>
    <property type="match status" value="1"/>
</dbReference>
<dbReference type="SMART" id="SM00134">
    <property type="entry name" value="LU"/>
    <property type="match status" value="1"/>
</dbReference>
<dbReference type="SUPFAM" id="SSF57302">
    <property type="entry name" value="Snake toxin-like"/>
    <property type="match status" value="2"/>
</dbReference>
<feature type="signal peptide" evidence="3">
    <location>
        <begin position="1"/>
        <end position="19"/>
    </location>
</feature>
<feature type="chain" id="PRO_0000023000" description="Phospholipase A2 inhibitor gamma subunit A" evidence="5">
    <location>
        <begin position="20"/>
        <end position="202"/>
    </location>
</feature>
<feature type="glycosylation site" description="N-linked (GlcNAc...) asparagine" evidence="2">
    <location>
        <position position="177"/>
    </location>
</feature>
<feature type="disulfide bond" evidence="1">
    <location>
        <begin position="22"/>
        <end position="47"/>
    </location>
</feature>
<feature type="disulfide bond" evidence="1">
    <location>
        <begin position="25"/>
        <end position="32"/>
    </location>
</feature>
<feature type="disulfide bond" evidence="1">
    <location>
        <begin position="40"/>
        <end position="68"/>
    </location>
</feature>
<feature type="disulfide bond" evidence="1">
    <location>
        <begin position="74"/>
        <end position="95"/>
    </location>
</feature>
<feature type="disulfide bond" evidence="1">
    <location>
        <begin position="96"/>
        <end position="101"/>
    </location>
</feature>
<feature type="disulfide bond" evidence="1">
    <location>
        <begin position="119"/>
        <end position="144"/>
    </location>
</feature>
<feature type="disulfide bond" evidence="1">
    <location>
        <begin position="137"/>
        <end position="166"/>
    </location>
</feature>
<feature type="disulfide bond" evidence="1">
    <location>
        <begin position="170"/>
        <end position="192"/>
    </location>
</feature>
<reference key="1">
    <citation type="journal article" date="1999" name="Biochem. J.">
        <title>Purification, characterization and cDNA cloning of a phospholipase A2 inhibitor from the serum of the non-venomous snake Elaphe quadrivirgata.</title>
        <authorList>
            <person name="Okumura K."/>
            <person name="Masui K."/>
            <person name="Inoue S."/>
            <person name="Ikeda K."/>
            <person name="Hayashi K."/>
        </authorList>
    </citation>
    <scope>NUCLEOTIDE SEQUENCE [MRNA]</scope>
    <scope>PROTEIN SEQUENCE OF 20-54</scope>
    <scope>SUBCELLULAR LOCATION</scope>
    <source>
        <tissue>Liver</tissue>
    </source>
</reference>
<sequence length="202" mass="22547">MKSLQIICLLFIFVARGSCRSCEICHNVGNDCGYDYVEECHSPEDQCGKVLLEISSAPLSIRSSHRNCFSSSLCKLEHFDVNTGQETYLRGRIHCCDEKKCEGRPFPGLPLSHPNGYVCPGVLGLFSEDSSESEAACKGDETKCINIVGYRKERFPGDIAYNIKGCVSSCPELRLSNRTHEERRNDLIKVECRDAVKITPSE</sequence>
<keyword id="KW-0903">Direct protein sequencing</keyword>
<keyword id="KW-1015">Disulfide bond</keyword>
<keyword id="KW-0325">Glycoprotein</keyword>
<keyword id="KW-0593">Phospholipase A2 inhibitor</keyword>
<keyword id="KW-0964">Secreted</keyword>
<keyword id="KW-0732">Signal</keyword>